<sequence>MEGTCFLRGQPLTTIPSLPSRKGFLLQRWKTNRIVRFSGFKNHSVSGKSRSFDLSLRASGPIRASSVVTEASPTNLNSKEEDLVFVAGATGKVGSRTVRELLKLGFRVRAGVRSAQRAGSLVQSVKEMKLQNTDEGTQPVEKLEIVECDLEKKDSIQPALGNASVIICCIGASEKEISDITGPYRIDYLATKNLVDAATSAKVNNFILVTSLGTNKFGFPAAILNLFWGVLCWKRKAEEALIESGLNYAIVRPGGMERPTDAYKETHNLTLALDDTLFGGQVSNLQVAELLACMAKNPQLSFSKIVEVVAETTAPLTPIEKLLEKIPSKRPYVPPPKASVATKEVKPVPTKPVTQEPTAPKEDEAPPKEKNVKPRPLSPYASYEDLKPPTSPIPNSTTSVSPAKSKEVDATQVPVEANVVPVPDSTSNVPVVEVKQVEEKKERPLSPYARYENLKPPSSPSPTASSTRKSDSLSPGPTDSDTDKSSTVAKTVTETAVATSVTETSVATSVPETAVATSVTETAAPATSKMRPLSPYAIYADLKPPTSPTPASTGPKEAASVEDNSELPGGNNDVLKTVDGNLNTIPPSTPEAVPVVSSAIDTSLASGDNTAQPKPRPLSPYTMYADMKPPTSPLPSPVTNH</sequence>
<organism>
    <name type="scientific">Arabidopsis thaliana</name>
    <name type="common">Mouse-ear cress</name>
    <dbReference type="NCBI Taxonomy" id="3702"/>
    <lineage>
        <taxon>Eukaryota</taxon>
        <taxon>Viridiplantae</taxon>
        <taxon>Streptophyta</taxon>
        <taxon>Embryophyta</taxon>
        <taxon>Tracheophyta</taxon>
        <taxon>Spermatophyta</taxon>
        <taxon>Magnoliopsida</taxon>
        <taxon>eudicotyledons</taxon>
        <taxon>Gunneridae</taxon>
        <taxon>Pentapetalae</taxon>
        <taxon>rosids</taxon>
        <taxon>malvids</taxon>
        <taxon>Brassicales</taxon>
        <taxon>Brassicaceae</taxon>
        <taxon>Camelineae</taxon>
        <taxon>Arabidopsis</taxon>
    </lineage>
</organism>
<gene>
    <name evidence="9" type="primary">TIC62</name>
    <name evidence="11" type="ordered locus">At3g18890</name>
    <name evidence="12" type="ORF">MCB22.6</name>
</gene>
<proteinExistence type="evidence at protein level"/>
<reference key="1">
    <citation type="journal article" date="2000" name="DNA Res.">
        <title>Structural analysis of Arabidopsis thaliana chromosome 3. II. Sequence features of the 4,251,695 bp regions covered by 90 P1, TAC and BAC clones.</title>
        <authorList>
            <person name="Kaneko T."/>
            <person name="Katoh T."/>
            <person name="Sato S."/>
            <person name="Nakamura Y."/>
            <person name="Asamizu E."/>
            <person name="Tabata S."/>
        </authorList>
    </citation>
    <scope>NUCLEOTIDE SEQUENCE [LARGE SCALE GENOMIC DNA]</scope>
    <source>
        <strain>cv. Columbia</strain>
    </source>
</reference>
<reference key="2">
    <citation type="journal article" date="2017" name="Plant J.">
        <title>Araport11: a complete reannotation of the Arabidopsis thaliana reference genome.</title>
        <authorList>
            <person name="Cheng C.Y."/>
            <person name="Krishnakumar V."/>
            <person name="Chan A.P."/>
            <person name="Thibaud-Nissen F."/>
            <person name="Schobel S."/>
            <person name="Town C.D."/>
        </authorList>
    </citation>
    <scope>GENOME REANNOTATION</scope>
    <source>
        <strain>cv. Columbia</strain>
    </source>
</reference>
<reference key="3">
    <citation type="journal article" date="2003" name="Science">
        <title>Empirical analysis of transcriptional activity in the Arabidopsis genome.</title>
        <authorList>
            <person name="Yamada K."/>
            <person name="Lim J."/>
            <person name="Dale J.M."/>
            <person name="Chen H."/>
            <person name="Shinn P."/>
            <person name="Palm C.J."/>
            <person name="Southwick A.M."/>
            <person name="Wu H.C."/>
            <person name="Kim C.J."/>
            <person name="Nguyen M."/>
            <person name="Pham P.K."/>
            <person name="Cheuk R.F."/>
            <person name="Karlin-Newmann G."/>
            <person name="Liu S.X."/>
            <person name="Lam B."/>
            <person name="Sakano H."/>
            <person name="Wu T."/>
            <person name="Yu G."/>
            <person name="Miranda M."/>
            <person name="Quach H.L."/>
            <person name="Tripp M."/>
            <person name="Chang C.H."/>
            <person name="Lee J.M."/>
            <person name="Toriumi M.J."/>
            <person name="Chan M.M."/>
            <person name="Tang C.C."/>
            <person name="Onodera C.S."/>
            <person name="Deng J.M."/>
            <person name="Akiyama K."/>
            <person name="Ansari Y."/>
            <person name="Arakawa T."/>
            <person name="Banh J."/>
            <person name="Banno F."/>
            <person name="Bowser L."/>
            <person name="Brooks S.Y."/>
            <person name="Carninci P."/>
            <person name="Chao Q."/>
            <person name="Choy N."/>
            <person name="Enju A."/>
            <person name="Goldsmith A.D."/>
            <person name="Gurjal M."/>
            <person name="Hansen N.F."/>
            <person name="Hayashizaki Y."/>
            <person name="Johnson-Hopson C."/>
            <person name="Hsuan V.W."/>
            <person name="Iida K."/>
            <person name="Karnes M."/>
            <person name="Khan S."/>
            <person name="Koesema E."/>
            <person name="Ishida J."/>
            <person name="Jiang P.X."/>
            <person name="Jones T."/>
            <person name="Kawai J."/>
            <person name="Kamiya A."/>
            <person name="Meyers C."/>
            <person name="Nakajima M."/>
            <person name="Narusaka M."/>
            <person name="Seki M."/>
            <person name="Sakurai T."/>
            <person name="Satou M."/>
            <person name="Tamse R."/>
            <person name="Vaysberg M."/>
            <person name="Wallender E.K."/>
            <person name="Wong C."/>
            <person name="Yamamura Y."/>
            <person name="Yuan S."/>
            <person name="Shinozaki K."/>
            <person name="Davis R.W."/>
            <person name="Theologis A."/>
            <person name="Ecker J.R."/>
        </authorList>
    </citation>
    <scope>NUCLEOTIDE SEQUENCE [LARGE SCALE MRNA]</scope>
    <source>
        <strain>cv. Columbia</strain>
    </source>
</reference>
<reference key="4">
    <citation type="journal article" date="2002" name="EMBO J.">
        <title>Protein import into chloroplasts involves redox-regulated proteins.</title>
        <authorList>
            <person name="Kuechler M."/>
            <person name="Decker S."/>
            <person name="Hoermann F."/>
            <person name="Soll J."/>
            <person name="Heins L."/>
        </authorList>
    </citation>
    <scope>FUNCTION</scope>
</reference>
<reference key="5">
    <citation type="journal article" date="2004" name="J. Biol. Chem.">
        <title>The protein translocon of the plastid envelopes.</title>
        <authorList>
            <person name="Vojta A."/>
            <person name="Alavi M."/>
            <person name="Becker T."/>
            <person name="Hoermann F."/>
            <person name="Kuechler M."/>
            <person name="Soll J."/>
            <person name="Thomson R."/>
            <person name="Schleiff E."/>
        </authorList>
    </citation>
    <scope>TISSUE SPECIFICITY</scope>
</reference>
<reference key="6">
    <citation type="journal article" date="2009" name="Plant Physiol.">
        <title>Large-scale Arabidopsis phosphoproteome profiling reveals novel chloroplast kinase substrates and phosphorylation networks.</title>
        <authorList>
            <person name="Reiland S."/>
            <person name="Messerli G."/>
            <person name="Baerenfaller K."/>
            <person name="Gerrits B."/>
            <person name="Endler A."/>
            <person name="Grossmann J."/>
            <person name="Gruissem W."/>
            <person name="Baginsky S."/>
        </authorList>
    </citation>
    <scope>IDENTIFICATION BY MASS SPECTROMETRY [LARGE SCALE ANALYSIS]</scope>
</reference>
<reference key="7">
    <citation type="journal article" date="2012" name="Mol. Cell. Proteomics">
        <title>Comparative large-scale characterisation of plant vs. mammal proteins reveals similar and idiosyncratic N-alpha acetylation features.</title>
        <authorList>
            <person name="Bienvenut W.V."/>
            <person name="Sumpton D."/>
            <person name="Martinez A."/>
            <person name="Lilla S."/>
            <person name="Espagne C."/>
            <person name="Meinnel T."/>
            <person name="Giglione C."/>
        </authorList>
    </citation>
    <scope>ACETYLATION [LARGE SCALE ANALYSIS] AT ALA-64</scope>
    <scope>CLEAVAGE OF TRANSIT PEPTIDE [LARGE SCALE ANALYSIS] AFTER ARG-63</scope>
    <scope>IDENTIFICATION BY MASS SPECTROMETRY [LARGE SCALE ANALYSIS]</scope>
</reference>
<reference key="8">
    <citation type="journal article" date="2007" name="BMC Evol. Biol.">
        <title>Tic62: a protein family from metabolism to protein translocation.</title>
        <authorList>
            <person name="Balsera M."/>
            <person name="Stengel A."/>
            <person name="Soll J."/>
            <person name="Boelter B."/>
        </authorList>
    </citation>
    <scope>3D-STRUCTURE MODELING</scope>
</reference>
<reference key="9">
    <citation type="journal article" date="2009" name="Plant Cell">
        <title>Arabidopsis Tic62 and ferredoxin-NADP(H) oxidoreductase form light-regulated complexes that are integrated into the chloroplast redox poise.</title>
        <authorList>
            <person name="Benz J.P."/>
            <person name="Stengel A."/>
            <person name="Lintala M."/>
            <person name="Lee Y.H."/>
            <person name="Weber A."/>
            <person name="Philippar K."/>
            <person name="Guegel I.L."/>
            <person name="Kaieda S."/>
            <person name="Ikegami T."/>
            <person name="Mulo P."/>
            <person name="Soll J."/>
            <person name="Boelter B."/>
        </authorList>
    </citation>
    <scope>SUBCELLULAR LOCATION</scope>
    <scope>TISSUE SPECIFICITY</scope>
    <scope>DEVELOPMENTAL STAGE</scope>
    <scope>INTERACTION WITH LFNR1 AND LFNR2</scope>
    <scope>DISRUPTION PHENOTYPE</scope>
</reference>
<reference key="10">
    <citation type="journal article" date="2011" name="Biochim. Biophys. Acta">
        <title>Chloroplast-targeted ferredoxin-NADP(+) oxidoreductase (FNR): structure, function and location.</title>
        <authorList>
            <person name="Mulo P."/>
        </authorList>
    </citation>
    <scope>INTERACTION WITH LFNR1 AND LFNR2</scope>
</reference>
<reference key="11">
    <citation type="journal article" date="2010" name="Biochim. Biophys. Acta">
        <title>Protein import into chloroplasts: the Tic complex and its regulation.</title>
        <authorList>
            <person name="Kovacs-Bogdan E."/>
            <person name="Soll J."/>
            <person name="Bolter B."/>
        </authorList>
    </citation>
    <scope>REVIEW</scope>
</reference>
<reference key="12">
    <citation type="journal article" date="2016" name="Plant Cell">
        <title>LIGHT-INDUCED RICE1 regulates light-dependent attachment of LEAF-TYPE FERREDOXIN-NADP+ OXIDOREDUCTASE to the thylakoid membrane in rice and Arabidopsis.</title>
        <authorList>
            <person name="Yang C."/>
            <person name="Hu H."/>
            <person name="Ren H."/>
            <person name="Kong Y."/>
            <person name="Lin H."/>
            <person name="Guo J."/>
            <person name="Wang L."/>
            <person name="He Y."/>
            <person name="Ding X."/>
            <person name="Grabsztunowicz M."/>
            <person name="Mulo P."/>
            <person name="Chen T."/>
            <person name="Liu Y."/>
            <person name="Wu Z."/>
            <person name="Wu Y."/>
            <person name="Mao C."/>
            <person name="Wu P."/>
            <person name="Mo X."/>
        </authorList>
    </citation>
    <scope>DISRUPTION PHENOTYPE</scope>
    <source>
        <strain>cv. Columbia</strain>
    </source>
</reference>
<feature type="transit peptide" description="Chloroplast" evidence="2 13">
    <location>
        <begin position="1"/>
        <end position="63"/>
    </location>
</feature>
<feature type="chain" id="PRO_0000413675" description="Protein TIC 62, chloroplastic">
    <location>
        <begin position="64"/>
        <end position="641"/>
    </location>
</feature>
<feature type="repeat" description="1">
    <location>
        <begin position="376"/>
        <end position="397"/>
    </location>
</feature>
<feature type="repeat" description="2">
    <location>
        <begin position="444"/>
        <end position="465"/>
    </location>
</feature>
<feature type="repeat" description="3">
    <location>
        <begin position="532"/>
        <end position="553"/>
    </location>
</feature>
<feature type="repeat" description="4">
    <location>
        <begin position="617"/>
        <end position="638"/>
    </location>
</feature>
<feature type="region of interest" description="Disordered" evidence="3">
    <location>
        <begin position="328"/>
        <end position="641"/>
    </location>
</feature>
<feature type="region of interest" description="4 X 22 AA approximate repeats">
    <location>
        <begin position="376"/>
        <end position="638"/>
    </location>
</feature>
<feature type="compositionally biased region" description="Basic and acidic residues" evidence="3">
    <location>
        <begin position="359"/>
        <end position="372"/>
    </location>
</feature>
<feature type="compositionally biased region" description="Low complexity" evidence="3">
    <location>
        <begin position="393"/>
        <end position="402"/>
    </location>
</feature>
<feature type="compositionally biased region" description="Basic and acidic residues" evidence="3">
    <location>
        <begin position="435"/>
        <end position="444"/>
    </location>
</feature>
<feature type="compositionally biased region" description="Low complexity" evidence="3">
    <location>
        <begin position="485"/>
        <end position="528"/>
    </location>
</feature>
<feature type="compositionally biased region" description="Polar residues" evidence="3">
    <location>
        <begin position="599"/>
        <end position="612"/>
    </location>
</feature>
<feature type="compositionally biased region" description="Pro residues" evidence="3">
    <location>
        <begin position="630"/>
        <end position="641"/>
    </location>
</feature>
<feature type="binding site" evidence="2">
    <location>
        <begin position="84"/>
        <end position="113"/>
    </location>
    <ligand>
        <name>NADP(+)</name>
        <dbReference type="ChEBI" id="CHEBI:58349"/>
    </ligand>
</feature>
<feature type="modified residue" description="N-acetylalanine" evidence="13">
    <location>
        <position position="64"/>
    </location>
</feature>
<dbReference type="EMBL" id="AP002039">
    <property type="protein sequence ID" value="BAB03098.1"/>
    <property type="status" value="ALT_SEQ"/>
    <property type="molecule type" value="Genomic_DNA"/>
</dbReference>
<dbReference type="EMBL" id="CP002686">
    <property type="protein sequence ID" value="AEE76164.1"/>
    <property type="molecule type" value="Genomic_DNA"/>
</dbReference>
<dbReference type="EMBL" id="BT002039">
    <property type="protein sequence ID" value="AAN72050.1"/>
    <property type="molecule type" value="mRNA"/>
</dbReference>
<dbReference type="EMBL" id="BT008403">
    <property type="protein sequence ID" value="AAP37762.1"/>
    <property type="molecule type" value="mRNA"/>
</dbReference>
<dbReference type="RefSeq" id="NP_188519.2">
    <property type="nucleotide sequence ID" value="NM_112775.4"/>
</dbReference>
<dbReference type="SMR" id="Q8H0U5"/>
<dbReference type="BioGRID" id="6755">
    <property type="interactions" value="2"/>
</dbReference>
<dbReference type="FunCoup" id="Q8H0U5">
    <property type="interactions" value="1392"/>
</dbReference>
<dbReference type="STRING" id="3702.Q8H0U5"/>
<dbReference type="GlyGen" id="Q8H0U5">
    <property type="glycosylation" value="3 sites"/>
</dbReference>
<dbReference type="iPTMnet" id="Q8H0U5"/>
<dbReference type="PaxDb" id="3702-AT3G18890.1"/>
<dbReference type="ProteomicsDB" id="246466"/>
<dbReference type="EnsemblPlants" id="AT3G18890.1">
    <property type="protein sequence ID" value="AT3G18890.1"/>
    <property type="gene ID" value="AT3G18890"/>
</dbReference>
<dbReference type="GeneID" id="821422"/>
<dbReference type="Gramene" id="AT3G18890.1">
    <property type="protein sequence ID" value="AT3G18890.1"/>
    <property type="gene ID" value="AT3G18890"/>
</dbReference>
<dbReference type="KEGG" id="ath:AT3G18890"/>
<dbReference type="Araport" id="AT3G18890"/>
<dbReference type="TAIR" id="AT3G18890">
    <property type="gene designation" value="TIC62"/>
</dbReference>
<dbReference type="eggNOG" id="KOG1203">
    <property type="taxonomic scope" value="Eukaryota"/>
</dbReference>
<dbReference type="HOGENOM" id="CLU_025711_7_1_1"/>
<dbReference type="InParanoid" id="Q8H0U5"/>
<dbReference type="OMA" id="RYPHARK"/>
<dbReference type="PhylomeDB" id="Q8H0U5"/>
<dbReference type="CD-CODE" id="4299E36E">
    <property type="entry name" value="Nucleolus"/>
</dbReference>
<dbReference type="PRO" id="PR:Q8H0U5"/>
<dbReference type="Proteomes" id="UP000006548">
    <property type="component" value="Chromosome 3"/>
</dbReference>
<dbReference type="ExpressionAtlas" id="Q8H0U5">
    <property type="expression patterns" value="baseline and differential"/>
</dbReference>
<dbReference type="GO" id="GO:0009507">
    <property type="term" value="C:chloroplast"/>
    <property type="evidence" value="ECO:0007005"/>
    <property type="project" value="TAIR"/>
</dbReference>
<dbReference type="GO" id="GO:0009941">
    <property type="term" value="C:chloroplast envelope"/>
    <property type="evidence" value="ECO:0007005"/>
    <property type="project" value="TAIR"/>
</dbReference>
<dbReference type="GO" id="GO:0009706">
    <property type="term" value="C:chloroplast inner membrane"/>
    <property type="evidence" value="ECO:0007669"/>
    <property type="project" value="UniProtKB-SubCell"/>
</dbReference>
<dbReference type="GO" id="GO:0009570">
    <property type="term" value="C:chloroplast stroma"/>
    <property type="evidence" value="ECO:0007669"/>
    <property type="project" value="UniProtKB-SubCell"/>
</dbReference>
<dbReference type="GO" id="GO:0009534">
    <property type="term" value="C:chloroplast thylakoid"/>
    <property type="evidence" value="ECO:0007005"/>
    <property type="project" value="TAIR"/>
</dbReference>
<dbReference type="GO" id="GO:0009535">
    <property type="term" value="C:chloroplast thylakoid membrane"/>
    <property type="evidence" value="ECO:0007005"/>
    <property type="project" value="TAIR"/>
</dbReference>
<dbReference type="GO" id="GO:0098807">
    <property type="term" value="C:chloroplast thylakoid membrane protein complex"/>
    <property type="evidence" value="ECO:0000250"/>
    <property type="project" value="UniProtKB"/>
</dbReference>
<dbReference type="GO" id="GO:0005829">
    <property type="term" value="C:cytosol"/>
    <property type="evidence" value="ECO:0007005"/>
    <property type="project" value="TAIR"/>
</dbReference>
<dbReference type="GO" id="GO:0015031">
    <property type="term" value="P:protein transport"/>
    <property type="evidence" value="ECO:0007669"/>
    <property type="project" value="UniProtKB-KW"/>
</dbReference>
<dbReference type="CDD" id="cd05243">
    <property type="entry name" value="SDR_a5"/>
    <property type="match status" value="1"/>
</dbReference>
<dbReference type="FunFam" id="3.40.50.720:FF:000499">
    <property type="entry name" value="Protein TIC 62, chloroplastic"/>
    <property type="match status" value="1"/>
</dbReference>
<dbReference type="Gene3D" id="3.40.50.720">
    <property type="entry name" value="NAD(P)-binding Rossmann-like Domain"/>
    <property type="match status" value="1"/>
</dbReference>
<dbReference type="InterPro" id="IPR016040">
    <property type="entry name" value="NAD(P)-bd_dom"/>
</dbReference>
<dbReference type="InterPro" id="IPR036291">
    <property type="entry name" value="NAD(P)-bd_dom_sf"/>
</dbReference>
<dbReference type="InterPro" id="IPR044719">
    <property type="entry name" value="TIC62"/>
</dbReference>
<dbReference type="PANTHER" id="PTHR47285">
    <property type="entry name" value="PROTEIN TIC 62, CHLOROPLASTIC"/>
    <property type="match status" value="1"/>
</dbReference>
<dbReference type="PANTHER" id="PTHR47285:SF1">
    <property type="entry name" value="PROTEIN TIC 62, CHLOROPLASTIC"/>
    <property type="match status" value="1"/>
</dbReference>
<dbReference type="Pfam" id="PF13460">
    <property type="entry name" value="NAD_binding_10"/>
    <property type="match status" value="1"/>
</dbReference>
<dbReference type="SUPFAM" id="SSF51735">
    <property type="entry name" value="NAD(P)-binding Rossmann-fold domains"/>
    <property type="match status" value="1"/>
</dbReference>
<protein>
    <recommendedName>
        <fullName evidence="9">Protein TIC 62, chloroplastic</fullName>
    </recommendedName>
    <alternativeName>
        <fullName evidence="9">Translocon at the inner envelope membrane of chloroplasts 62</fullName>
        <shortName evidence="9">AtTIC62</shortName>
    </alternativeName>
</protein>
<evidence type="ECO:0000250" key="1"/>
<evidence type="ECO:0000255" key="2"/>
<evidence type="ECO:0000256" key="3">
    <source>
        <dbReference type="SAM" id="MobiDB-lite"/>
    </source>
</evidence>
<evidence type="ECO:0000269" key="4">
    <source>
    </source>
</evidence>
<evidence type="ECO:0000269" key="5">
    <source>
    </source>
</evidence>
<evidence type="ECO:0000269" key="6">
    <source>
    </source>
</evidence>
<evidence type="ECO:0000269" key="7">
    <source>
    </source>
</evidence>
<evidence type="ECO:0000269" key="8">
    <source>
    </source>
</evidence>
<evidence type="ECO:0000303" key="9">
    <source>
    </source>
</evidence>
<evidence type="ECO:0000305" key="10"/>
<evidence type="ECO:0000312" key="11">
    <source>
        <dbReference type="Araport" id="AT3G18890"/>
    </source>
</evidence>
<evidence type="ECO:0000312" key="12">
    <source>
        <dbReference type="EMBL" id="BAB03098.1"/>
    </source>
</evidence>
<evidence type="ECO:0007744" key="13">
    <source>
    </source>
</evidence>
<keyword id="KW-0007">Acetylation</keyword>
<keyword id="KW-0150">Chloroplast</keyword>
<keyword id="KW-0472">Membrane</keyword>
<keyword id="KW-0520">NAD</keyword>
<keyword id="KW-0934">Plastid</keyword>
<keyword id="KW-1001">Plastid inner membrane</keyword>
<keyword id="KW-0653">Protein transport</keyword>
<keyword id="KW-1185">Reference proteome</keyword>
<keyword id="KW-0677">Repeat</keyword>
<keyword id="KW-0793">Thylakoid</keyword>
<keyword id="KW-0809">Transit peptide</keyword>
<keyword id="KW-0813">Transport</keyword>
<name>TIC62_ARATH</name>
<comment type="function">
    <text evidence="1 4">Involved in protein precursor import into chloroplasts. Part of the redox regulon consisting of TIC32, TIC 55 and TIC62 (PubMed:12426385). Acts as a membrane anchor of LFNR1 and LFNR2. Has a NADPH-dependent dehydrogenase activity, but only after preincubation with lipids (By similarity).</text>
</comment>
<comment type="subunit">
    <text evidence="6 7">Part of the Tic complex. Interacts with TIC110 and TIC55. Interacts with LFNR1 and LFNR2. Component of high molecular weight thylakoid LFNRs-containing protein complexes containing LIR1, LFNR1, LFNR2, TIC62 and TROL proteins.</text>
</comment>
<comment type="subcellular location">
    <subcellularLocation>
        <location evidence="6">Plastid</location>
        <location evidence="6">Chloroplast inner membrane</location>
        <topology evidence="6">Peripheral membrane protein</topology>
    </subcellularLocation>
    <subcellularLocation>
        <location evidence="6">Plastid</location>
        <location evidence="6">Chloroplast stroma</location>
    </subcellularLocation>
    <subcellularLocation>
        <location evidence="6">Plastid</location>
        <location evidence="6">Chloroplast thylakoid</location>
    </subcellularLocation>
    <text>Shuttles between the membranes and the stroma, depending on the redox state of the plastidic NADP(+)/NADPH pool.</text>
</comment>
<comment type="tissue specificity">
    <text evidence="5 6">Expressed in cotyledons and leaves, but not in roots.</text>
</comment>
<comment type="developmental stage">
    <text evidence="6">Expressed from day 3 of seedling development and continues throughout the development of photosynthetic tissues.</text>
</comment>
<comment type="disruption phenotype">
    <text evidence="6 8">No visible phenotype, but loss of membrane-bound LFNR1 or LFNR2.</text>
</comment>
<comment type="sequence caution" evidence="10">
    <conflict type="erroneous gene model prediction">
        <sequence resource="EMBL-CDS" id="BAB03098"/>
    </conflict>
</comment>
<accession>Q8H0U5</accession>
<accession>Q9LHN0</accession>